<name>PQQE_ACIBS</name>
<comment type="function">
    <text evidence="1">Catalyzes the cross-linking of a glutamate residue and a tyrosine residue in the PqqA protein as part of the biosynthesis of pyrroloquinoline quinone (PQQ).</text>
</comment>
<comment type="catalytic activity">
    <reaction evidence="1">
        <text>[PQQ precursor protein] + S-adenosyl-L-methionine = E-Y cross-linked-[PQQ precursor protein] + 5'-deoxyadenosine + L-methionine + H(+)</text>
        <dbReference type="Rhea" id="RHEA:56836"/>
        <dbReference type="Rhea" id="RHEA-COMP:14800"/>
        <dbReference type="Rhea" id="RHEA-COMP:14801"/>
        <dbReference type="ChEBI" id="CHEBI:15378"/>
        <dbReference type="ChEBI" id="CHEBI:17319"/>
        <dbReference type="ChEBI" id="CHEBI:57844"/>
        <dbReference type="ChEBI" id="CHEBI:59789"/>
        <dbReference type="ChEBI" id="CHEBI:141026"/>
        <dbReference type="ChEBI" id="CHEBI:141027"/>
        <dbReference type="EC" id="1.21.98.4"/>
    </reaction>
</comment>
<comment type="cofactor">
    <cofactor evidence="1">
        <name>[4Fe-4S] cluster</name>
        <dbReference type="ChEBI" id="CHEBI:49883"/>
    </cofactor>
    <text evidence="1">Binds 1 [4Fe-4S] cluster. The cluster is coordinated with 3 cysteines and an exchangeable S-adenosyl-L-methionine.</text>
</comment>
<comment type="pathway">
    <text evidence="1">Cofactor biosynthesis; pyrroloquinoline quinone biosynthesis.</text>
</comment>
<comment type="subunit">
    <text evidence="1">Interacts with PqqD. The interaction is necessary for activity of PqqE.</text>
</comment>
<comment type="similarity">
    <text evidence="1">Belongs to the radical SAM superfamily. PqqE family.</text>
</comment>
<reference key="1">
    <citation type="journal article" date="2008" name="PLoS ONE">
        <title>Comparative analysis of Acinetobacters: three genomes for three lifestyles.</title>
        <authorList>
            <person name="Vallenet D."/>
            <person name="Nordmann P."/>
            <person name="Barbe V."/>
            <person name="Poirel L."/>
            <person name="Mangenot S."/>
            <person name="Bataille E."/>
            <person name="Dossat C."/>
            <person name="Gas S."/>
            <person name="Kreimeyer A."/>
            <person name="Lenoble P."/>
            <person name="Oztas S."/>
            <person name="Poulain J."/>
            <person name="Segurens B."/>
            <person name="Robert C."/>
            <person name="Abergel C."/>
            <person name="Claverie J.-M."/>
            <person name="Raoult D."/>
            <person name="Medigue C."/>
            <person name="Weissenbach J."/>
            <person name="Cruveiller S."/>
        </authorList>
    </citation>
    <scope>NUCLEOTIDE SEQUENCE [LARGE SCALE GENOMIC DNA]</scope>
    <source>
        <strain>SDF</strain>
    </source>
</reference>
<sequence>MTEGVGLPLWLLAELTYRCLLQCPYCSNPLDYAQHKNELTTQEWFDVFDQARQMGAVQLGFSGGEPLVRQDLEQLVAHAHQLGFYTNLVTSGMGLTEQRISHLKQAGLDHIQISFQASDPVLNDALAGSKHAFEQKYEMCRLVKKYDYPMVLNFVIHRHNIDQIDKIIELCLELNADTVELAICQFYGWAFLNRQGLLPTQEQLIRAERITNEYREKLKAQNHPCKLIFVVPDYYEERPKACMNGWGKIFFTVAPDGMALPCHAARQLPISFPNVREQSLSRIWYESTGFNRFRGDAWMPEGCRSCPDKDRDFGGCRCQAYMLTGDASNADPVCGKSPYHQFIEQARAESEIDSSLEKLVFRNSRNSKQFTVQQNIPVQNIVDD</sequence>
<keyword id="KW-0004">4Fe-4S</keyword>
<keyword id="KW-0408">Iron</keyword>
<keyword id="KW-0411">Iron-sulfur</keyword>
<keyword id="KW-0479">Metal-binding</keyword>
<keyword id="KW-0560">Oxidoreductase</keyword>
<keyword id="KW-0884">PQQ biosynthesis</keyword>
<keyword id="KW-0949">S-adenosyl-L-methionine</keyword>
<accession>B0VQD7</accession>
<proteinExistence type="inferred from homology"/>
<organism>
    <name type="scientific">Acinetobacter baumannii (strain SDF)</name>
    <dbReference type="NCBI Taxonomy" id="509170"/>
    <lineage>
        <taxon>Bacteria</taxon>
        <taxon>Pseudomonadati</taxon>
        <taxon>Pseudomonadota</taxon>
        <taxon>Gammaproteobacteria</taxon>
        <taxon>Moraxellales</taxon>
        <taxon>Moraxellaceae</taxon>
        <taxon>Acinetobacter</taxon>
        <taxon>Acinetobacter calcoaceticus/baumannii complex</taxon>
    </lineage>
</organism>
<protein>
    <recommendedName>
        <fullName evidence="1">PqqA peptide cyclase</fullName>
        <ecNumber evidence="1">1.21.98.4</ecNumber>
    </recommendedName>
    <alternativeName>
        <fullName evidence="1">Coenzyme PQQ synthesis protein E</fullName>
    </alternativeName>
    <alternativeName>
        <fullName evidence="1">Pyrroloquinoline quinone biosynthesis protein E</fullName>
    </alternativeName>
</protein>
<feature type="chain" id="PRO_1000131273" description="PqqA peptide cyclase">
    <location>
        <begin position="1"/>
        <end position="384"/>
    </location>
</feature>
<feature type="domain" description="Radical SAM core" evidence="2">
    <location>
        <begin position="5"/>
        <end position="220"/>
    </location>
</feature>
<feature type="binding site" evidence="1">
    <location>
        <position position="19"/>
    </location>
    <ligand>
        <name>[4Fe-4S] cluster</name>
        <dbReference type="ChEBI" id="CHEBI:49883"/>
        <note>4Fe-4S-S-AdoMet</note>
    </ligand>
</feature>
<feature type="binding site" evidence="1">
    <location>
        <position position="23"/>
    </location>
    <ligand>
        <name>[4Fe-4S] cluster</name>
        <dbReference type="ChEBI" id="CHEBI:49883"/>
        <note>4Fe-4S-S-AdoMet</note>
    </ligand>
</feature>
<feature type="binding site" evidence="1">
    <location>
        <position position="26"/>
    </location>
    <ligand>
        <name>[4Fe-4S] cluster</name>
        <dbReference type="ChEBI" id="CHEBI:49883"/>
        <note>4Fe-4S-S-AdoMet</note>
    </ligand>
</feature>
<gene>
    <name evidence="1" type="primary">pqqE</name>
    <name type="ordered locus">ABSDF1983</name>
</gene>
<evidence type="ECO:0000255" key="1">
    <source>
        <dbReference type="HAMAP-Rule" id="MF_00660"/>
    </source>
</evidence>
<evidence type="ECO:0000255" key="2">
    <source>
        <dbReference type="PROSITE-ProRule" id="PRU01266"/>
    </source>
</evidence>
<dbReference type="EC" id="1.21.98.4" evidence="1"/>
<dbReference type="EMBL" id="CU468230">
    <property type="protein sequence ID" value="CAP01316.1"/>
    <property type="molecule type" value="Genomic_DNA"/>
</dbReference>
<dbReference type="SMR" id="B0VQD7"/>
<dbReference type="KEGG" id="abm:ABSDF1983"/>
<dbReference type="HOGENOM" id="CLU_009273_4_7_6"/>
<dbReference type="UniPathway" id="UPA00539"/>
<dbReference type="Proteomes" id="UP000001741">
    <property type="component" value="Chromosome"/>
</dbReference>
<dbReference type="GO" id="GO:0051539">
    <property type="term" value="F:4 iron, 4 sulfur cluster binding"/>
    <property type="evidence" value="ECO:0007669"/>
    <property type="project" value="UniProtKB-KW"/>
</dbReference>
<dbReference type="GO" id="GO:0009975">
    <property type="term" value="F:cyclase activity"/>
    <property type="evidence" value="ECO:0007669"/>
    <property type="project" value="UniProtKB-UniRule"/>
</dbReference>
<dbReference type="GO" id="GO:0005506">
    <property type="term" value="F:iron ion binding"/>
    <property type="evidence" value="ECO:0007669"/>
    <property type="project" value="UniProtKB-UniRule"/>
</dbReference>
<dbReference type="GO" id="GO:0016491">
    <property type="term" value="F:oxidoreductase activity"/>
    <property type="evidence" value="ECO:0007669"/>
    <property type="project" value="UniProtKB-KW"/>
</dbReference>
<dbReference type="GO" id="GO:1904047">
    <property type="term" value="F:S-adenosyl-L-methionine binding"/>
    <property type="evidence" value="ECO:0007669"/>
    <property type="project" value="UniProtKB-UniRule"/>
</dbReference>
<dbReference type="GO" id="GO:0018189">
    <property type="term" value="P:pyrroloquinoline quinone biosynthetic process"/>
    <property type="evidence" value="ECO:0007669"/>
    <property type="project" value="UniProtKB-UniRule"/>
</dbReference>
<dbReference type="CDD" id="cd01335">
    <property type="entry name" value="Radical_SAM"/>
    <property type="match status" value="1"/>
</dbReference>
<dbReference type="CDD" id="cd21119">
    <property type="entry name" value="SPASM_PqqE"/>
    <property type="match status" value="1"/>
</dbReference>
<dbReference type="Gene3D" id="3.20.20.70">
    <property type="entry name" value="Aldolase class I"/>
    <property type="match status" value="1"/>
</dbReference>
<dbReference type="HAMAP" id="MF_00660">
    <property type="entry name" value="PqqE"/>
    <property type="match status" value="1"/>
</dbReference>
<dbReference type="InterPro" id="IPR023885">
    <property type="entry name" value="4Fe4S-binding_SPASM_dom"/>
</dbReference>
<dbReference type="InterPro" id="IPR013785">
    <property type="entry name" value="Aldolase_TIM"/>
</dbReference>
<dbReference type="InterPro" id="IPR006638">
    <property type="entry name" value="Elp3/MiaA/NifB-like_rSAM"/>
</dbReference>
<dbReference type="InterPro" id="IPR011843">
    <property type="entry name" value="PQQ_synth_PqqE_bac"/>
</dbReference>
<dbReference type="InterPro" id="IPR017200">
    <property type="entry name" value="PqqE-like"/>
</dbReference>
<dbReference type="InterPro" id="IPR050377">
    <property type="entry name" value="Radical_SAM_PqqE_MftC-like"/>
</dbReference>
<dbReference type="InterPro" id="IPR007197">
    <property type="entry name" value="rSAM"/>
</dbReference>
<dbReference type="NCBIfam" id="TIGR02109">
    <property type="entry name" value="PQQ_syn_pqqE"/>
    <property type="match status" value="1"/>
</dbReference>
<dbReference type="NCBIfam" id="TIGR04085">
    <property type="entry name" value="rSAM_more_4Fe4S"/>
    <property type="match status" value="1"/>
</dbReference>
<dbReference type="PANTHER" id="PTHR11228:SF7">
    <property type="entry name" value="PQQA PEPTIDE CYCLASE"/>
    <property type="match status" value="1"/>
</dbReference>
<dbReference type="PANTHER" id="PTHR11228">
    <property type="entry name" value="RADICAL SAM DOMAIN PROTEIN"/>
    <property type="match status" value="1"/>
</dbReference>
<dbReference type="Pfam" id="PF13353">
    <property type="entry name" value="Fer4_12"/>
    <property type="match status" value="1"/>
</dbReference>
<dbReference type="Pfam" id="PF04055">
    <property type="entry name" value="Radical_SAM"/>
    <property type="match status" value="1"/>
</dbReference>
<dbReference type="Pfam" id="PF13186">
    <property type="entry name" value="SPASM"/>
    <property type="match status" value="1"/>
</dbReference>
<dbReference type="PIRSF" id="PIRSF037420">
    <property type="entry name" value="PQQ_syn_pqqE"/>
    <property type="match status" value="1"/>
</dbReference>
<dbReference type="SFLD" id="SFLDF00280">
    <property type="entry name" value="coenzyme_PQQ_synthesis_protein"/>
    <property type="match status" value="1"/>
</dbReference>
<dbReference type="SFLD" id="SFLDG01386">
    <property type="entry name" value="main_SPASM_domain-containing"/>
    <property type="match status" value="1"/>
</dbReference>
<dbReference type="SMART" id="SM00729">
    <property type="entry name" value="Elp3"/>
    <property type="match status" value="1"/>
</dbReference>
<dbReference type="SUPFAM" id="SSF102114">
    <property type="entry name" value="Radical SAM enzymes"/>
    <property type="match status" value="1"/>
</dbReference>
<dbReference type="PROSITE" id="PS51918">
    <property type="entry name" value="RADICAL_SAM"/>
    <property type="match status" value="1"/>
</dbReference>